<accession>Q2LVG6</accession>
<reference key="1">
    <citation type="journal article" date="2007" name="Proc. Natl. Acad. Sci. U.S.A.">
        <title>The genome of Syntrophus aciditrophicus: life at the thermodynamic limit of microbial growth.</title>
        <authorList>
            <person name="McInerney M.J."/>
            <person name="Rohlin L."/>
            <person name="Mouttaki H."/>
            <person name="Kim U."/>
            <person name="Krupp R.S."/>
            <person name="Rios-Hernandez L."/>
            <person name="Sieber J."/>
            <person name="Struchtemeyer C.G."/>
            <person name="Bhattacharyya A."/>
            <person name="Campbell J.W."/>
            <person name="Gunsalus R.P."/>
        </authorList>
    </citation>
    <scope>NUCLEOTIDE SEQUENCE [LARGE SCALE GENOMIC DNA]</scope>
    <source>
        <strain>SB</strain>
    </source>
</reference>
<feature type="chain" id="PRO_1000015296" description="S-adenosylmethionine:tRNA ribosyltransferase-isomerase">
    <location>
        <begin position="1"/>
        <end position="362"/>
    </location>
</feature>
<comment type="function">
    <text evidence="1">Transfers and isomerizes the ribose moiety from AdoMet to the 7-aminomethyl group of 7-deazaguanine (preQ1-tRNA) to give epoxyqueuosine (oQ-tRNA).</text>
</comment>
<comment type="catalytic activity">
    <reaction evidence="1">
        <text>7-aminomethyl-7-carbaguanosine(34) in tRNA + S-adenosyl-L-methionine = epoxyqueuosine(34) in tRNA + adenine + L-methionine + 2 H(+)</text>
        <dbReference type="Rhea" id="RHEA:32155"/>
        <dbReference type="Rhea" id="RHEA-COMP:10342"/>
        <dbReference type="Rhea" id="RHEA-COMP:18582"/>
        <dbReference type="ChEBI" id="CHEBI:15378"/>
        <dbReference type="ChEBI" id="CHEBI:16708"/>
        <dbReference type="ChEBI" id="CHEBI:57844"/>
        <dbReference type="ChEBI" id="CHEBI:59789"/>
        <dbReference type="ChEBI" id="CHEBI:82833"/>
        <dbReference type="ChEBI" id="CHEBI:194443"/>
        <dbReference type="EC" id="2.4.99.17"/>
    </reaction>
</comment>
<comment type="pathway">
    <text evidence="1">tRNA modification; tRNA-queuosine biosynthesis.</text>
</comment>
<comment type="subunit">
    <text evidence="1">Monomer.</text>
</comment>
<comment type="subcellular location">
    <subcellularLocation>
        <location evidence="1">Cytoplasm</location>
    </subcellularLocation>
</comment>
<comment type="similarity">
    <text evidence="1">Belongs to the QueA family.</text>
</comment>
<proteinExistence type="inferred from homology"/>
<name>QUEA_SYNAS</name>
<keyword id="KW-0963">Cytoplasm</keyword>
<keyword id="KW-0671">Queuosine biosynthesis</keyword>
<keyword id="KW-1185">Reference proteome</keyword>
<keyword id="KW-0949">S-adenosyl-L-methionine</keyword>
<keyword id="KW-0808">Transferase</keyword>
<sequence>MMKLQDFDYQLPQSRIAQSPCAKRDHARMMVLDRRIGSLEHRHFYDFPDFVRKGDVLVINDSKVIPARLSGRKETGSRIELLLLSRYSDSPAVPETDSTEWPFFRVGVEETWEALLKPGKRIRIGTSIFFDDHSRATVIERINEKKWLLTFNTALPFDLFLQRYGKAPLPPYIKREKKNAQMPEDRDRYQTIYARSPGSIAAPTAGFHFSEALFKTLRELEIVIAPVTLHVGFGTFTPIETEDVEDHVMEVESFSISPESSDKINSAERVIAVGTTSTRVLESAADEQGRVHPMSGQSRLFIYPGYRFKRVQALLTNFHLPKSSLFLLACAFAGKDRIQQAYATAIQEEYRFYSYGDCMLII</sequence>
<evidence type="ECO:0000255" key="1">
    <source>
        <dbReference type="HAMAP-Rule" id="MF_00113"/>
    </source>
</evidence>
<organism>
    <name type="scientific">Syntrophus aciditrophicus (strain SB)</name>
    <dbReference type="NCBI Taxonomy" id="56780"/>
    <lineage>
        <taxon>Bacteria</taxon>
        <taxon>Pseudomonadati</taxon>
        <taxon>Thermodesulfobacteriota</taxon>
        <taxon>Syntrophia</taxon>
        <taxon>Syntrophales</taxon>
        <taxon>Syntrophaceae</taxon>
        <taxon>Syntrophus</taxon>
    </lineage>
</organism>
<dbReference type="EC" id="2.4.99.17" evidence="1"/>
<dbReference type="EMBL" id="CP000252">
    <property type="protein sequence ID" value="ABC78080.1"/>
    <property type="molecule type" value="Genomic_DNA"/>
</dbReference>
<dbReference type="SMR" id="Q2LVG6"/>
<dbReference type="FunCoup" id="Q2LVG6">
    <property type="interactions" value="420"/>
</dbReference>
<dbReference type="STRING" id="56780.SYN_00039"/>
<dbReference type="KEGG" id="sat:SYN_00039"/>
<dbReference type="eggNOG" id="COG0809">
    <property type="taxonomic scope" value="Bacteria"/>
</dbReference>
<dbReference type="HOGENOM" id="CLU_039110_1_0_7"/>
<dbReference type="InParanoid" id="Q2LVG6"/>
<dbReference type="UniPathway" id="UPA00392"/>
<dbReference type="Proteomes" id="UP000001933">
    <property type="component" value="Chromosome"/>
</dbReference>
<dbReference type="GO" id="GO:0005737">
    <property type="term" value="C:cytoplasm"/>
    <property type="evidence" value="ECO:0007669"/>
    <property type="project" value="UniProtKB-SubCell"/>
</dbReference>
<dbReference type="GO" id="GO:0051075">
    <property type="term" value="F:S-adenosylmethionine:tRNA ribosyltransferase-isomerase activity"/>
    <property type="evidence" value="ECO:0007669"/>
    <property type="project" value="UniProtKB-EC"/>
</dbReference>
<dbReference type="GO" id="GO:0008616">
    <property type="term" value="P:queuosine biosynthetic process"/>
    <property type="evidence" value="ECO:0007669"/>
    <property type="project" value="UniProtKB-UniRule"/>
</dbReference>
<dbReference type="GO" id="GO:0002099">
    <property type="term" value="P:tRNA wobble guanine modification"/>
    <property type="evidence" value="ECO:0007669"/>
    <property type="project" value="TreeGrafter"/>
</dbReference>
<dbReference type="FunFam" id="2.40.10.240:FF:000002">
    <property type="entry name" value="S-adenosylmethionine:tRNA ribosyltransferase-isomerase"/>
    <property type="match status" value="1"/>
</dbReference>
<dbReference type="Gene3D" id="2.40.10.240">
    <property type="entry name" value="QueA-like"/>
    <property type="match status" value="1"/>
</dbReference>
<dbReference type="Gene3D" id="3.40.1780.10">
    <property type="entry name" value="QueA-like"/>
    <property type="match status" value="1"/>
</dbReference>
<dbReference type="HAMAP" id="MF_00113">
    <property type="entry name" value="QueA"/>
    <property type="match status" value="1"/>
</dbReference>
<dbReference type="InterPro" id="IPR003699">
    <property type="entry name" value="QueA"/>
</dbReference>
<dbReference type="InterPro" id="IPR042118">
    <property type="entry name" value="QueA_dom1"/>
</dbReference>
<dbReference type="InterPro" id="IPR042119">
    <property type="entry name" value="QueA_dom2"/>
</dbReference>
<dbReference type="InterPro" id="IPR036100">
    <property type="entry name" value="QueA_sf"/>
</dbReference>
<dbReference type="NCBIfam" id="NF001140">
    <property type="entry name" value="PRK00147.1"/>
    <property type="match status" value="1"/>
</dbReference>
<dbReference type="NCBIfam" id="TIGR00113">
    <property type="entry name" value="queA"/>
    <property type="match status" value="1"/>
</dbReference>
<dbReference type="PANTHER" id="PTHR30307">
    <property type="entry name" value="S-ADENOSYLMETHIONINE:TRNA RIBOSYLTRANSFERASE-ISOMERASE"/>
    <property type="match status" value="1"/>
</dbReference>
<dbReference type="PANTHER" id="PTHR30307:SF0">
    <property type="entry name" value="S-ADENOSYLMETHIONINE:TRNA RIBOSYLTRANSFERASE-ISOMERASE"/>
    <property type="match status" value="1"/>
</dbReference>
<dbReference type="Pfam" id="PF02547">
    <property type="entry name" value="Queuosine_synth"/>
    <property type="match status" value="1"/>
</dbReference>
<dbReference type="SUPFAM" id="SSF111337">
    <property type="entry name" value="QueA-like"/>
    <property type="match status" value="1"/>
</dbReference>
<protein>
    <recommendedName>
        <fullName evidence="1">S-adenosylmethionine:tRNA ribosyltransferase-isomerase</fullName>
        <ecNumber evidence="1">2.4.99.17</ecNumber>
    </recommendedName>
    <alternativeName>
        <fullName evidence="1">Queuosine biosynthesis protein QueA</fullName>
    </alternativeName>
</protein>
<gene>
    <name evidence="1" type="primary">queA</name>
    <name type="ordered locus">SYNAS_22010</name>
    <name type="ORF">SYN_00039</name>
</gene>